<gene>
    <name evidence="1" type="primary">betB</name>
</gene>
<dbReference type="EC" id="1.2.1.8" evidence="1"/>
<dbReference type="EMBL" id="AJ238780">
    <property type="protein sequence ID" value="CAB77175.1"/>
    <property type="molecule type" value="Genomic_DNA"/>
</dbReference>
<dbReference type="SMR" id="Q9L4K1"/>
<dbReference type="STRING" id="290398.Csal_1515"/>
<dbReference type="UniPathway" id="UPA00529">
    <property type="reaction ID" value="UER00386"/>
</dbReference>
<dbReference type="GO" id="GO:0008802">
    <property type="term" value="F:betaine-aldehyde dehydrogenase (NAD+) activity"/>
    <property type="evidence" value="ECO:0007669"/>
    <property type="project" value="UniProtKB-UniRule"/>
</dbReference>
<dbReference type="GO" id="GO:0046872">
    <property type="term" value="F:metal ion binding"/>
    <property type="evidence" value="ECO:0007669"/>
    <property type="project" value="UniProtKB-KW"/>
</dbReference>
<dbReference type="GO" id="GO:0019285">
    <property type="term" value="P:glycine betaine biosynthetic process from choline"/>
    <property type="evidence" value="ECO:0007669"/>
    <property type="project" value="UniProtKB-UniRule"/>
</dbReference>
<dbReference type="FunFam" id="3.40.605.10:FF:000026">
    <property type="entry name" value="Aldehyde dehydrogenase, putative"/>
    <property type="match status" value="1"/>
</dbReference>
<dbReference type="FunFam" id="3.40.309.10:FF:000014">
    <property type="entry name" value="NAD/NADP-dependent betaine aldehyde dehydrogenase"/>
    <property type="match status" value="1"/>
</dbReference>
<dbReference type="FunFam" id="3.40.605.10:FF:000007">
    <property type="entry name" value="NAD/NADP-dependent betaine aldehyde dehydrogenase"/>
    <property type="match status" value="1"/>
</dbReference>
<dbReference type="Gene3D" id="3.40.605.10">
    <property type="entry name" value="Aldehyde Dehydrogenase, Chain A, domain 1"/>
    <property type="match status" value="1"/>
</dbReference>
<dbReference type="Gene3D" id="3.40.309.10">
    <property type="entry name" value="Aldehyde Dehydrogenase, Chain A, domain 2"/>
    <property type="match status" value="1"/>
</dbReference>
<dbReference type="HAMAP" id="MF_00804">
    <property type="entry name" value="BADH"/>
    <property type="match status" value="1"/>
</dbReference>
<dbReference type="InterPro" id="IPR016161">
    <property type="entry name" value="Ald_DH/histidinol_DH"/>
</dbReference>
<dbReference type="InterPro" id="IPR016163">
    <property type="entry name" value="Ald_DH_C"/>
</dbReference>
<dbReference type="InterPro" id="IPR016160">
    <property type="entry name" value="Ald_DH_CS_CYS"/>
</dbReference>
<dbReference type="InterPro" id="IPR029510">
    <property type="entry name" value="Ald_DH_CS_GLU"/>
</dbReference>
<dbReference type="InterPro" id="IPR016162">
    <property type="entry name" value="Ald_DH_N"/>
</dbReference>
<dbReference type="InterPro" id="IPR015590">
    <property type="entry name" value="Aldehyde_DH_dom"/>
</dbReference>
<dbReference type="InterPro" id="IPR011264">
    <property type="entry name" value="BADH"/>
</dbReference>
<dbReference type="NCBIfam" id="TIGR01804">
    <property type="entry name" value="BADH"/>
    <property type="match status" value="1"/>
</dbReference>
<dbReference type="NCBIfam" id="NF009725">
    <property type="entry name" value="PRK13252.1"/>
    <property type="match status" value="1"/>
</dbReference>
<dbReference type="PANTHER" id="PTHR11699">
    <property type="entry name" value="ALDEHYDE DEHYDROGENASE-RELATED"/>
    <property type="match status" value="1"/>
</dbReference>
<dbReference type="Pfam" id="PF00171">
    <property type="entry name" value="Aldedh"/>
    <property type="match status" value="1"/>
</dbReference>
<dbReference type="SUPFAM" id="SSF53720">
    <property type="entry name" value="ALDH-like"/>
    <property type="match status" value="1"/>
</dbReference>
<dbReference type="PROSITE" id="PS00070">
    <property type="entry name" value="ALDEHYDE_DEHYDR_CYS"/>
    <property type="match status" value="1"/>
</dbReference>
<dbReference type="PROSITE" id="PS00687">
    <property type="entry name" value="ALDEHYDE_DEHYDR_GLU"/>
    <property type="match status" value="1"/>
</dbReference>
<protein>
    <recommendedName>
        <fullName evidence="1">Betaine aldehyde dehydrogenase</fullName>
        <shortName evidence="1">BADH</shortName>
        <ecNumber evidence="1">1.2.1.8</ecNumber>
    </recommendedName>
</protein>
<organism>
    <name type="scientific">Chromohalobacter salexigens (strain ATCC BAA-138 / DSM 3043 / CIP 106854 / NCIMB 13768 / 1H11)</name>
    <dbReference type="NCBI Taxonomy" id="290398"/>
    <lineage>
        <taxon>Bacteria</taxon>
        <taxon>Pseudomonadati</taxon>
        <taxon>Pseudomonadota</taxon>
        <taxon>Gammaproteobacteria</taxon>
        <taxon>Oceanospirillales</taxon>
        <taxon>Halomonadaceae</taxon>
        <taxon>Chromohalobacter</taxon>
    </lineage>
</organism>
<proteinExistence type="inferred from homology"/>
<accession>Q9L4K1</accession>
<name>BETB_CHRSD</name>
<reference key="1">
    <citation type="journal article" date="2000" name="Microbiology">
        <title>Genes for the synthesis of the osmoprotectant glycine betaine from choline in the moderately halophilic bacterium Halomonas elongata DSM 3043.</title>
        <authorList>
            <person name="Canovas D."/>
            <person name="Vargas C."/>
            <person name="Kneip S."/>
            <person name="Moron M.J."/>
            <person name="Ventosa A."/>
            <person name="Bremer E."/>
            <person name="Nieto J.J."/>
        </authorList>
    </citation>
    <scope>NUCLEOTIDE SEQUENCE [GENOMIC DNA]</scope>
</reference>
<evidence type="ECO:0000255" key="1">
    <source>
        <dbReference type="HAMAP-Rule" id="MF_00804"/>
    </source>
</evidence>
<comment type="function">
    <text evidence="1">Involved in the biosynthesis of the osmoprotectant glycine betaine. Catalyzes the irreversible oxidation of betaine aldehyde to the corresponding acid.</text>
</comment>
<comment type="catalytic activity">
    <reaction evidence="1">
        <text>betaine aldehyde + NAD(+) + H2O = glycine betaine + NADH + 2 H(+)</text>
        <dbReference type="Rhea" id="RHEA:15305"/>
        <dbReference type="ChEBI" id="CHEBI:15377"/>
        <dbReference type="ChEBI" id="CHEBI:15378"/>
        <dbReference type="ChEBI" id="CHEBI:15710"/>
        <dbReference type="ChEBI" id="CHEBI:17750"/>
        <dbReference type="ChEBI" id="CHEBI:57540"/>
        <dbReference type="ChEBI" id="CHEBI:57945"/>
        <dbReference type="EC" id="1.2.1.8"/>
    </reaction>
    <physiologicalReaction direction="left-to-right" evidence="1">
        <dbReference type="Rhea" id="RHEA:15306"/>
    </physiologicalReaction>
</comment>
<comment type="cofactor">
    <cofactor evidence="1">
        <name>K(+)</name>
        <dbReference type="ChEBI" id="CHEBI:29103"/>
    </cofactor>
    <text evidence="1">Binds 2 potassium ions per subunit.</text>
</comment>
<comment type="pathway">
    <text evidence="1">Amine and polyamine biosynthesis; betaine biosynthesis via choline pathway; betaine from betaine aldehyde: step 1/1.</text>
</comment>
<comment type="subunit">
    <text evidence="1">Dimer of dimers.</text>
</comment>
<comment type="similarity">
    <text evidence="1">Belongs to the aldehyde dehydrogenase family.</text>
</comment>
<feature type="chain" id="PRO_0000056545" description="Betaine aldehyde dehydrogenase">
    <location>
        <begin position="1"/>
        <end position="489"/>
    </location>
</feature>
<feature type="active site" description="Charge relay system" evidence="1">
    <location>
        <position position="162"/>
    </location>
</feature>
<feature type="active site" description="Proton acceptor" evidence="1">
    <location>
        <position position="251"/>
    </location>
</feature>
<feature type="active site" description="Nucleophile" evidence="1">
    <location>
        <position position="285"/>
    </location>
</feature>
<feature type="active site" description="Charge relay system" evidence="1">
    <location>
        <position position="463"/>
    </location>
</feature>
<feature type="binding site" evidence="1">
    <location>
        <position position="93"/>
    </location>
    <ligand>
        <name>K(+)</name>
        <dbReference type="ChEBI" id="CHEBI:29103"/>
        <label>1</label>
    </ligand>
</feature>
<feature type="binding site" evidence="1">
    <location>
        <begin position="150"/>
        <end position="152"/>
    </location>
    <ligand>
        <name>NAD(+)</name>
        <dbReference type="ChEBI" id="CHEBI:57540"/>
    </ligand>
</feature>
<feature type="binding site" evidence="1">
    <location>
        <begin position="176"/>
        <end position="179"/>
    </location>
    <ligand>
        <name>NAD(+)</name>
        <dbReference type="ChEBI" id="CHEBI:57540"/>
    </ligand>
</feature>
<feature type="binding site" evidence="1">
    <location>
        <position position="180"/>
    </location>
    <ligand>
        <name>K(+)</name>
        <dbReference type="ChEBI" id="CHEBI:29103"/>
        <label>1</label>
    </ligand>
</feature>
<feature type="binding site" evidence="1">
    <location>
        <begin position="229"/>
        <end position="232"/>
    </location>
    <ligand>
        <name>NAD(+)</name>
        <dbReference type="ChEBI" id="CHEBI:57540"/>
    </ligand>
</feature>
<feature type="binding site" evidence="1">
    <location>
        <position position="245"/>
    </location>
    <ligand>
        <name>K(+)</name>
        <dbReference type="ChEBI" id="CHEBI:29103"/>
        <label>2</label>
    </ligand>
</feature>
<feature type="binding site" evidence="1">
    <location>
        <position position="253"/>
    </location>
    <ligand>
        <name>NAD(+)</name>
        <dbReference type="ChEBI" id="CHEBI:57540"/>
    </ligand>
</feature>
<feature type="binding site" description="covalent" evidence="1">
    <location>
        <position position="285"/>
    </location>
    <ligand>
        <name>NAD(+)</name>
        <dbReference type="ChEBI" id="CHEBI:57540"/>
    </ligand>
</feature>
<feature type="binding site" evidence="1">
    <location>
        <position position="386"/>
    </location>
    <ligand>
        <name>NAD(+)</name>
        <dbReference type="ChEBI" id="CHEBI:57540"/>
    </ligand>
</feature>
<feature type="binding site" evidence="1">
    <location>
        <position position="456"/>
    </location>
    <ligand>
        <name>K(+)</name>
        <dbReference type="ChEBI" id="CHEBI:29103"/>
        <label>2</label>
    </ligand>
</feature>
<feature type="binding site" evidence="1">
    <location>
        <position position="459"/>
    </location>
    <ligand>
        <name>K(+)</name>
        <dbReference type="ChEBI" id="CHEBI:29103"/>
        <label>2</label>
    </ligand>
</feature>
<feature type="site" description="Seems to be a necessary countercharge to the potassium cations" evidence="1">
    <location>
        <position position="247"/>
    </location>
</feature>
<feature type="modified residue" description="Cysteine sulfenic acid (-SOH)" evidence="1">
    <location>
        <position position="285"/>
    </location>
</feature>
<keyword id="KW-0479">Metal-binding</keyword>
<keyword id="KW-0520">NAD</keyword>
<keyword id="KW-0521">NADP</keyword>
<keyword id="KW-0558">Oxidation</keyword>
<keyword id="KW-0560">Oxidoreductase</keyword>
<keyword id="KW-0630">Potassium</keyword>
<sequence>MTAQSAQPLYIGGRPVDATSGETFTVTNPYDGSLLATIGQASQADVDSAVQAAQRGQREWAAMTGMERSRILLRAVALLRERNDELAELETRNTGKPISETASVDIVTGADALEYYAGLAPAIEGSQIPLRDTRLVYTRREPLGVIGAIGAWNYPIQIACWKAAPALAAGNAIVFKPSEVTPLTALKLAEIFTEAGLPDGVFNVVQGDGRVGAMLTEHEGIAKVSFTGEVGTGKKVMAAAGGSTLKDVTMELGGKSPLIVFADADLDRAADAAMMANFYSSGQICTNGTRVFVERSAKEAFEAKLVERVARIKAGDPMDPSVNFGPLVSFEHQEKVLSYIALGKEQGARVLAGGDAWNSGEWAKGAWAAPTVFTDCTDEMRVVKEEIFGPVMSVLAFDDEEEVIRRANNTKYGLAAGVFSESLNRAHRVIHQLEAGICWINTWGESPSEMPVGGYKESGIGRENGVETLNHYTQTKSVQIEMGPFESVF</sequence>